<protein>
    <recommendedName>
        <fullName evidence="1">Ribosomal RNA large subunit methyltransferase E</fullName>
        <ecNumber evidence="1">2.1.1.166</ecNumber>
    </recommendedName>
    <alternativeName>
        <fullName evidence="1">23S rRNA Um2552 methyltransferase</fullName>
    </alternativeName>
    <alternativeName>
        <fullName evidence="1">rRNA (uridine-2'-O-)-methyltransferase</fullName>
    </alternativeName>
</protein>
<organism>
    <name type="scientific">Pseudomonas entomophila (strain L48)</name>
    <dbReference type="NCBI Taxonomy" id="384676"/>
    <lineage>
        <taxon>Bacteria</taxon>
        <taxon>Pseudomonadati</taxon>
        <taxon>Pseudomonadota</taxon>
        <taxon>Gammaproteobacteria</taxon>
        <taxon>Pseudomonadales</taxon>
        <taxon>Pseudomonadaceae</taxon>
        <taxon>Pseudomonas</taxon>
    </lineage>
</organism>
<feature type="chain" id="PRO_0000282776" description="Ribosomal RNA large subunit methyltransferase E">
    <location>
        <begin position="1"/>
        <end position="208"/>
    </location>
</feature>
<feature type="active site" description="Proton acceptor" evidence="1">
    <location>
        <position position="162"/>
    </location>
</feature>
<feature type="binding site" evidence="1">
    <location>
        <position position="61"/>
    </location>
    <ligand>
        <name>S-adenosyl-L-methionine</name>
        <dbReference type="ChEBI" id="CHEBI:59789"/>
    </ligand>
</feature>
<feature type="binding site" evidence="1">
    <location>
        <position position="63"/>
    </location>
    <ligand>
        <name>S-adenosyl-L-methionine</name>
        <dbReference type="ChEBI" id="CHEBI:59789"/>
    </ligand>
</feature>
<feature type="binding site" evidence="1">
    <location>
        <position position="81"/>
    </location>
    <ligand>
        <name>S-adenosyl-L-methionine</name>
        <dbReference type="ChEBI" id="CHEBI:59789"/>
    </ligand>
</feature>
<feature type="binding site" evidence="1">
    <location>
        <position position="97"/>
    </location>
    <ligand>
        <name>S-adenosyl-L-methionine</name>
        <dbReference type="ChEBI" id="CHEBI:59789"/>
    </ligand>
</feature>
<feature type="binding site" evidence="1">
    <location>
        <position position="122"/>
    </location>
    <ligand>
        <name>S-adenosyl-L-methionine</name>
        <dbReference type="ChEBI" id="CHEBI:59789"/>
    </ligand>
</feature>
<keyword id="KW-0963">Cytoplasm</keyword>
<keyword id="KW-0489">Methyltransferase</keyword>
<keyword id="KW-0698">rRNA processing</keyword>
<keyword id="KW-0949">S-adenosyl-L-methionine</keyword>
<keyword id="KW-0808">Transferase</keyword>
<sequence length="208" mass="23246">MVQRSKSSANWLREHFNDPFVKQAQKDGYRSRASYKLLEIQEKDRLIRPGMSVIDLGAAPGGWSQVTSRLIGGQGRLIASDILEMDSIPDVTFIQGDFTQDEVLQQILQAVGDSHVDLVISDMAPNMSGTPAVDMPRAMFLCELALDLATRVLKPGGDFLIKIFQGEGFDMYLKDVRSKFDKVQMRKPSSSRDRSREQYLLGKGFKGA</sequence>
<name>RLME_PSEE4</name>
<evidence type="ECO:0000255" key="1">
    <source>
        <dbReference type="HAMAP-Rule" id="MF_01547"/>
    </source>
</evidence>
<gene>
    <name evidence="1" type="primary">rlmE</name>
    <name evidence="1" type="synonym">ftsJ</name>
    <name evidence="1" type="synonym">rrmJ</name>
    <name type="ordered locus">PSEEN0786</name>
</gene>
<reference key="1">
    <citation type="journal article" date="2006" name="Nat. Biotechnol.">
        <title>Complete genome sequence of the entomopathogenic and metabolically versatile soil bacterium Pseudomonas entomophila.</title>
        <authorList>
            <person name="Vodovar N."/>
            <person name="Vallenet D."/>
            <person name="Cruveiller S."/>
            <person name="Rouy Z."/>
            <person name="Barbe V."/>
            <person name="Acosta C."/>
            <person name="Cattolico L."/>
            <person name="Jubin C."/>
            <person name="Lajus A."/>
            <person name="Segurens B."/>
            <person name="Vacherie B."/>
            <person name="Wincker P."/>
            <person name="Weissenbach J."/>
            <person name="Lemaitre B."/>
            <person name="Medigue C."/>
            <person name="Boccard F."/>
        </authorList>
    </citation>
    <scope>NUCLEOTIDE SEQUENCE [LARGE SCALE GENOMIC DNA]</scope>
    <source>
        <strain>L48</strain>
    </source>
</reference>
<comment type="function">
    <text evidence="1">Specifically methylates the uridine in position 2552 of 23S rRNA at the 2'-O position of the ribose in the fully assembled 50S ribosomal subunit.</text>
</comment>
<comment type="catalytic activity">
    <reaction evidence="1">
        <text>uridine(2552) in 23S rRNA + S-adenosyl-L-methionine = 2'-O-methyluridine(2552) in 23S rRNA + S-adenosyl-L-homocysteine + H(+)</text>
        <dbReference type="Rhea" id="RHEA:42720"/>
        <dbReference type="Rhea" id="RHEA-COMP:10202"/>
        <dbReference type="Rhea" id="RHEA-COMP:10203"/>
        <dbReference type="ChEBI" id="CHEBI:15378"/>
        <dbReference type="ChEBI" id="CHEBI:57856"/>
        <dbReference type="ChEBI" id="CHEBI:59789"/>
        <dbReference type="ChEBI" id="CHEBI:65315"/>
        <dbReference type="ChEBI" id="CHEBI:74478"/>
        <dbReference type="EC" id="2.1.1.166"/>
    </reaction>
</comment>
<comment type="subcellular location">
    <subcellularLocation>
        <location evidence="1">Cytoplasm</location>
    </subcellularLocation>
</comment>
<comment type="similarity">
    <text evidence="1">Belongs to the class I-like SAM-binding methyltransferase superfamily. RNA methyltransferase RlmE family.</text>
</comment>
<accession>Q1IF51</accession>
<proteinExistence type="inferred from homology"/>
<dbReference type="EC" id="2.1.1.166" evidence="1"/>
<dbReference type="EMBL" id="CT573326">
    <property type="protein sequence ID" value="CAK13703.1"/>
    <property type="molecule type" value="Genomic_DNA"/>
</dbReference>
<dbReference type="RefSeq" id="WP_011532133.1">
    <property type="nucleotide sequence ID" value="NC_008027.1"/>
</dbReference>
<dbReference type="SMR" id="Q1IF51"/>
<dbReference type="STRING" id="384676.PSEEN0786"/>
<dbReference type="GeneID" id="93679913"/>
<dbReference type="KEGG" id="pen:PSEEN0786"/>
<dbReference type="eggNOG" id="COG0293">
    <property type="taxonomic scope" value="Bacteria"/>
</dbReference>
<dbReference type="HOGENOM" id="CLU_009422_4_0_6"/>
<dbReference type="OrthoDB" id="9790080at2"/>
<dbReference type="Proteomes" id="UP000000658">
    <property type="component" value="Chromosome"/>
</dbReference>
<dbReference type="GO" id="GO:0005737">
    <property type="term" value="C:cytoplasm"/>
    <property type="evidence" value="ECO:0007669"/>
    <property type="project" value="UniProtKB-SubCell"/>
</dbReference>
<dbReference type="GO" id="GO:0008650">
    <property type="term" value="F:rRNA (uridine-2'-O-)-methyltransferase activity"/>
    <property type="evidence" value="ECO:0007669"/>
    <property type="project" value="UniProtKB-UniRule"/>
</dbReference>
<dbReference type="FunFam" id="3.40.50.150:FF:000005">
    <property type="entry name" value="Ribosomal RNA large subunit methyltransferase E"/>
    <property type="match status" value="1"/>
</dbReference>
<dbReference type="Gene3D" id="3.40.50.150">
    <property type="entry name" value="Vaccinia Virus protein VP39"/>
    <property type="match status" value="1"/>
</dbReference>
<dbReference type="HAMAP" id="MF_01547">
    <property type="entry name" value="RNA_methyltr_E"/>
    <property type="match status" value="1"/>
</dbReference>
<dbReference type="InterPro" id="IPR050082">
    <property type="entry name" value="RNA_methyltr_RlmE"/>
</dbReference>
<dbReference type="InterPro" id="IPR002877">
    <property type="entry name" value="RNA_MeTrfase_FtsJ_dom"/>
</dbReference>
<dbReference type="InterPro" id="IPR015507">
    <property type="entry name" value="rRNA-MeTfrase_E"/>
</dbReference>
<dbReference type="InterPro" id="IPR029063">
    <property type="entry name" value="SAM-dependent_MTases_sf"/>
</dbReference>
<dbReference type="NCBIfam" id="NF008390">
    <property type="entry name" value="PRK11188.1"/>
    <property type="match status" value="1"/>
</dbReference>
<dbReference type="PANTHER" id="PTHR10920">
    <property type="entry name" value="RIBOSOMAL RNA METHYLTRANSFERASE"/>
    <property type="match status" value="1"/>
</dbReference>
<dbReference type="PANTHER" id="PTHR10920:SF18">
    <property type="entry name" value="RRNA METHYLTRANSFERASE 2, MITOCHONDRIAL"/>
    <property type="match status" value="1"/>
</dbReference>
<dbReference type="Pfam" id="PF01728">
    <property type="entry name" value="FtsJ"/>
    <property type="match status" value="1"/>
</dbReference>
<dbReference type="PIRSF" id="PIRSF005461">
    <property type="entry name" value="23S_rRNA_mtase"/>
    <property type="match status" value="1"/>
</dbReference>
<dbReference type="SUPFAM" id="SSF53335">
    <property type="entry name" value="S-adenosyl-L-methionine-dependent methyltransferases"/>
    <property type="match status" value="1"/>
</dbReference>